<reference key="1">
    <citation type="submission" date="2007-10" db="EMBL/GenBank/DDBJ databases">
        <title>Brucella canis ATCC 23365 whole genome shotgun sequencing project.</title>
        <authorList>
            <person name="Setubal J.C."/>
            <person name="Bowns C."/>
            <person name="Boyle S."/>
            <person name="Crasta O.R."/>
            <person name="Czar M.J."/>
            <person name="Dharmanolla C."/>
            <person name="Gillespie J.J."/>
            <person name="Kenyon R.W."/>
            <person name="Lu J."/>
            <person name="Mane S."/>
            <person name="Mohapatra S."/>
            <person name="Nagrani S."/>
            <person name="Purkayastha A."/>
            <person name="Rajasimha H.K."/>
            <person name="Shallom J.M."/>
            <person name="Shallom S."/>
            <person name="Shukla M."/>
            <person name="Snyder E.E."/>
            <person name="Sobral B.W."/>
            <person name="Wattam A.R."/>
            <person name="Will R."/>
            <person name="Williams K."/>
            <person name="Yoo H."/>
            <person name="Bruce D."/>
            <person name="Detter C."/>
            <person name="Munk C."/>
            <person name="Brettin T.S."/>
        </authorList>
    </citation>
    <scope>NUCLEOTIDE SEQUENCE [LARGE SCALE GENOMIC DNA]</scope>
    <source>
        <strain>ATCC 23365 / NCTC 10854 / RM-666</strain>
    </source>
</reference>
<sequence length="498" mass="54737">MSGYILAIDQGTTSTRSMLFDRNMRVVGLGQQEFTQHFPSSGWVEHDAEEIWKSVQSTIRIALAQAGISAADVAAIGITNQRETTVVWDRISGKPVHRAIVWQDRRTAQFCDELKRRNLEPLFTEKTGLLLDPYFSGTKLAWLLNHVPGLRERAQKGQVCFGTIDSWLIYKLTGGKAHVTDATNASRTLIYHIGENRWDDELLDILGIPAAMLPEVKDCAADFGMTDPALFGVSIPILGVAGDQQAAVIGNACFEPGMMKSTYGTGCFALLNTGTDRVTSSNRLLTTIAYRLDGVTTYALEGSIFIAGAAVQWLRDEMGFISVASEVSALAEKADPNQRIYLVPAFTGLGAPYWDAEARGAIFGLTRGTGRAEFARAALESVAYQTFDLLEAMQGDWKGATNHTVLRVDGGMVASDWTMQRLADILNAPVDRPVFLETTVLGAAWLAASRAGIWPDRKGFSERWQRDCRFEPAMPEKERESAIAGWRDSVSRCLTRPQ</sequence>
<keyword id="KW-0067">ATP-binding</keyword>
<keyword id="KW-0319">Glycerol metabolism</keyword>
<keyword id="KW-0418">Kinase</keyword>
<keyword id="KW-0547">Nucleotide-binding</keyword>
<keyword id="KW-1185">Reference proteome</keyword>
<keyword id="KW-0808">Transferase</keyword>
<dbReference type="EC" id="2.7.1.30" evidence="1"/>
<dbReference type="EMBL" id="CP000873">
    <property type="protein sequence ID" value="ABX63626.1"/>
    <property type="molecule type" value="Genomic_DNA"/>
</dbReference>
<dbReference type="RefSeq" id="WP_004687359.1">
    <property type="nucleotide sequence ID" value="NC_010104.1"/>
</dbReference>
<dbReference type="SMR" id="A9MB89"/>
<dbReference type="GeneID" id="55592133"/>
<dbReference type="KEGG" id="bcs:BCAN_B0445"/>
<dbReference type="HOGENOM" id="CLU_009281_2_3_5"/>
<dbReference type="UniPathway" id="UPA00618">
    <property type="reaction ID" value="UER00672"/>
</dbReference>
<dbReference type="PRO" id="PR:A9MB89"/>
<dbReference type="Proteomes" id="UP000001385">
    <property type="component" value="Chromosome II"/>
</dbReference>
<dbReference type="GO" id="GO:0005829">
    <property type="term" value="C:cytosol"/>
    <property type="evidence" value="ECO:0007669"/>
    <property type="project" value="TreeGrafter"/>
</dbReference>
<dbReference type="GO" id="GO:0005524">
    <property type="term" value="F:ATP binding"/>
    <property type="evidence" value="ECO:0007669"/>
    <property type="project" value="UniProtKB-UniRule"/>
</dbReference>
<dbReference type="GO" id="GO:0004370">
    <property type="term" value="F:glycerol kinase activity"/>
    <property type="evidence" value="ECO:0000250"/>
    <property type="project" value="UniProtKB"/>
</dbReference>
<dbReference type="GO" id="GO:0019563">
    <property type="term" value="P:glycerol catabolic process"/>
    <property type="evidence" value="ECO:0007669"/>
    <property type="project" value="UniProtKB-UniRule"/>
</dbReference>
<dbReference type="GO" id="GO:0006071">
    <property type="term" value="P:glycerol metabolic process"/>
    <property type="evidence" value="ECO:0000250"/>
    <property type="project" value="UniProtKB"/>
</dbReference>
<dbReference type="GO" id="GO:0006072">
    <property type="term" value="P:glycerol-3-phosphate metabolic process"/>
    <property type="evidence" value="ECO:0007669"/>
    <property type="project" value="InterPro"/>
</dbReference>
<dbReference type="CDD" id="cd07786">
    <property type="entry name" value="FGGY_EcGK_like"/>
    <property type="match status" value="1"/>
</dbReference>
<dbReference type="FunFam" id="3.30.420.40:FF:000007">
    <property type="entry name" value="Glycerol kinase"/>
    <property type="match status" value="1"/>
</dbReference>
<dbReference type="FunFam" id="3.30.420.40:FF:000008">
    <property type="entry name" value="Glycerol kinase"/>
    <property type="match status" value="1"/>
</dbReference>
<dbReference type="Gene3D" id="3.30.420.40">
    <property type="match status" value="2"/>
</dbReference>
<dbReference type="HAMAP" id="MF_00186">
    <property type="entry name" value="Glycerol_kin"/>
    <property type="match status" value="1"/>
</dbReference>
<dbReference type="InterPro" id="IPR043129">
    <property type="entry name" value="ATPase_NBD"/>
</dbReference>
<dbReference type="InterPro" id="IPR000577">
    <property type="entry name" value="Carb_kinase_FGGY"/>
</dbReference>
<dbReference type="InterPro" id="IPR018483">
    <property type="entry name" value="Carb_kinase_FGGY_CS"/>
</dbReference>
<dbReference type="InterPro" id="IPR018485">
    <property type="entry name" value="FGGY_C"/>
</dbReference>
<dbReference type="InterPro" id="IPR018484">
    <property type="entry name" value="FGGY_N"/>
</dbReference>
<dbReference type="InterPro" id="IPR005999">
    <property type="entry name" value="Glycerol_kin"/>
</dbReference>
<dbReference type="NCBIfam" id="TIGR01311">
    <property type="entry name" value="glycerol_kin"/>
    <property type="match status" value="1"/>
</dbReference>
<dbReference type="NCBIfam" id="NF000756">
    <property type="entry name" value="PRK00047.1"/>
    <property type="match status" value="1"/>
</dbReference>
<dbReference type="PANTHER" id="PTHR10196:SF78">
    <property type="entry name" value="GLYCEROL KINASE"/>
    <property type="match status" value="1"/>
</dbReference>
<dbReference type="PANTHER" id="PTHR10196">
    <property type="entry name" value="SUGAR KINASE"/>
    <property type="match status" value="1"/>
</dbReference>
<dbReference type="Pfam" id="PF02782">
    <property type="entry name" value="FGGY_C"/>
    <property type="match status" value="1"/>
</dbReference>
<dbReference type="Pfam" id="PF00370">
    <property type="entry name" value="FGGY_N"/>
    <property type="match status" value="1"/>
</dbReference>
<dbReference type="PIRSF" id="PIRSF000538">
    <property type="entry name" value="GlpK"/>
    <property type="match status" value="1"/>
</dbReference>
<dbReference type="SUPFAM" id="SSF53067">
    <property type="entry name" value="Actin-like ATPase domain"/>
    <property type="match status" value="2"/>
</dbReference>
<dbReference type="PROSITE" id="PS00933">
    <property type="entry name" value="FGGY_KINASES_1"/>
    <property type="match status" value="1"/>
</dbReference>
<dbReference type="PROSITE" id="PS00445">
    <property type="entry name" value="FGGY_KINASES_2"/>
    <property type="match status" value="1"/>
</dbReference>
<gene>
    <name evidence="1" type="primary">glpK</name>
    <name type="ordered locus">BCAN_B0445</name>
</gene>
<accession>A9MB89</accession>
<protein>
    <recommendedName>
        <fullName evidence="1">Glycerol kinase</fullName>
        <ecNumber evidence="1">2.7.1.30</ecNumber>
    </recommendedName>
    <alternativeName>
        <fullName evidence="1">ATP:glycerol 3-phosphotransferase</fullName>
    </alternativeName>
    <alternativeName>
        <fullName evidence="1">Glycerokinase</fullName>
        <shortName evidence="1">GK</shortName>
    </alternativeName>
</protein>
<proteinExistence type="inferred from homology"/>
<evidence type="ECO:0000255" key="1">
    <source>
        <dbReference type="HAMAP-Rule" id="MF_00186"/>
    </source>
</evidence>
<feature type="chain" id="PRO_1000077410" description="Glycerol kinase">
    <location>
        <begin position="1"/>
        <end position="498"/>
    </location>
</feature>
<feature type="binding site" evidence="1">
    <location>
        <position position="12"/>
    </location>
    <ligand>
        <name>ADP</name>
        <dbReference type="ChEBI" id="CHEBI:456216"/>
    </ligand>
</feature>
<feature type="binding site" evidence="1">
    <location>
        <position position="12"/>
    </location>
    <ligand>
        <name>ATP</name>
        <dbReference type="ChEBI" id="CHEBI:30616"/>
    </ligand>
</feature>
<feature type="binding site" evidence="1">
    <location>
        <position position="12"/>
    </location>
    <ligand>
        <name>sn-glycerol 3-phosphate</name>
        <dbReference type="ChEBI" id="CHEBI:57597"/>
    </ligand>
</feature>
<feature type="binding site" evidence="1">
    <location>
        <position position="13"/>
    </location>
    <ligand>
        <name>ATP</name>
        <dbReference type="ChEBI" id="CHEBI:30616"/>
    </ligand>
</feature>
<feature type="binding site" evidence="1">
    <location>
        <position position="14"/>
    </location>
    <ligand>
        <name>ATP</name>
        <dbReference type="ChEBI" id="CHEBI:30616"/>
    </ligand>
</feature>
<feature type="binding site" evidence="1">
    <location>
        <position position="16"/>
    </location>
    <ligand>
        <name>ADP</name>
        <dbReference type="ChEBI" id="CHEBI:456216"/>
    </ligand>
</feature>
<feature type="binding site" evidence="1">
    <location>
        <position position="82"/>
    </location>
    <ligand>
        <name>glycerol</name>
        <dbReference type="ChEBI" id="CHEBI:17754"/>
    </ligand>
</feature>
<feature type="binding site" evidence="1">
    <location>
        <position position="82"/>
    </location>
    <ligand>
        <name>sn-glycerol 3-phosphate</name>
        <dbReference type="ChEBI" id="CHEBI:57597"/>
    </ligand>
</feature>
<feature type="binding site" evidence="1">
    <location>
        <position position="83"/>
    </location>
    <ligand>
        <name>glycerol</name>
        <dbReference type="ChEBI" id="CHEBI:17754"/>
    </ligand>
</feature>
<feature type="binding site" evidence="1">
    <location>
        <position position="83"/>
    </location>
    <ligand>
        <name>sn-glycerol 3-phosphate</name>
        <dbReference type="ChEBI" id="CHEBI:57597"/>
    </ligand>
</feature>
<feature type="binding site" evidence="1">
    <location>
        <position position="134"/>
    </location>
    <ligand>
        <name>glycerol</name>
        <dbReference type="ChEBI" id="CHEBI:17754"/>
    </ligand>
</feature>
<feature type="binding site" evidence="1">
    <location>
        <position position="134"/>
    </location>
    <ligand>
        <name>sn-glycerol 3-phosphate</name>
        <dbReference type="ChEBI" id="CHEBI:57597"/>
    </ligand>
</feature>
<feature type="binding site" evidence="1">
    <location>
        <position position="243"/>
    </location>
    <ligand>
        <name>glycerol</name>
        <dbReference type="ChEBI" id="CHEBI:17754"/>
    </ligand>
</feature>
<feature type="binding site" evidence="1">
    <location>
        <position position="243"/>
    </location>
    <ligand>
        <name>sn-glycerol 3-phosphate</name>
        <dbReference type="ChEBI" id="CHEBI:57597"/>
    </ligand>
</feature>
<feature type="binding site" evidence="1">
    <location>
        <position position="244"/>
    </location>
    <ligand>
        <name>glycerol</name>
        <dbReference type="ChEBI" id="CHEBI:17754"/>
    </ligand>
</feature>
<feature type="binding site" evidence="1">
    <location>
        <position position="265"/>
    </location>
    <ligand>
        <name>ADP</name>
        <dbReference type="ChEBI" id="CHEBI:456216"/>
    </ligand>
</feature>
<feature type="binding site" evidence="1">
    <location>
        <position position="265"/>
    </location>
    <ligand>
        <name>ATP</name>
        <dbReference type="ChEBI" id="CHEBI:30616"/>
    </ligand>
</feature>
<feature type="binding site" evidence="1">
    <location>
        <position position="308"/>
    </location>
    <ligand>
        <name>ADP</name>
        <dbReference type="ChEBI" id="CHEBI:456216"/>
    </ligand>
</feature>
<feature type="binding site" evidence="1">
    <location>
        <position position="308"/>
    </location>
    <ligand>
        <name>ATP</name>
        <dbReference type="ChEBI" id="CHEBI:30616"/>
    </ligand>
</feature>
<feature type="binding site" evidence="1">
    <location>
        <position position="312"/>
    </location>
    <ligand>
        <name>ATP</name>
        <dbReference type="ChEBI" id="CHEBI:30616"/>
    </ligand>
</feature>
<feature type="binding site" evidence="1">
    <location>
        <position position="411"/>
    </location>
    <ligand>
        <name>ADP</name>
        <dbReference type="ChEBI" id="CHEBI:456216"/>
    </ligand>
</feature>
<feature type="binding site" evidence="1">
    <location>
        <position position="411"/>
    </location>
    <ligand>
        <name>ATP</name>
        <dbReference type="ChEBI" id="CHEBI:30616"/>
    </ligand>
</feature>
<name>GLPK_BRUC2</name>
<organism>
    <name type="scientific">Brucella canis (strain ATCC 23365 / NCTC 10854 / RM-666)</name>
    <dbReference type="NCBI Taxonomy" id="483179"/>
    <lineage>
        <taxon>Bacteria</taxon>
        <taxon>Pseudomonadati</taxon>
        <taxon>Pseudomonadota</taxon>
        <taxon>Alphaproteobacteria</taxon>
        <taxon>Hyphomicrobiales</taxon>
        <taxon>Brucellaceae</taxon>
        <taxon>Brucella/Ochrobactrum group</taxon>
        <taxon>Brucella</taxon>
    </lineage>
</organism>
<comment type="function">
    <text evidence="1">Key enzyme in the regulation of glycerol uptake and metabolism. Catalyzes the phosphorylation of glycerol to yield sn-glycerol 3-phosphate.</text>
</comment>
<comment type="catalytic activity">
    <reaction evidence="1">
        <text>glycerol + ATP = sn-glycerol 3-phosphate + ADP + H(+)</text>
        <dbReference type="Rhea" id="RHEA:21644"/>
        <dbReference type="ChEBI" id="CHEBI:15378"/>
        <dbReference type="ChEBI" id="CHEBI:17754"/>
        <dbReference type="ChEBI" id="CHEBI:30616"/>
        <dbReference type="ChEBI" id="CHEBI:57597"/>
        <dbReference type="ChEBI" id="CHEBI:456216"/>
        <dbReference type="EC" id="2.7.1.30"/>
    </reaction>
</comment>
<comment type="activity regulation">
    <text evidence="1">Inhibited by fructose 1,6-bisphosphate (FBP).</text>
</comment>
<comment type="pathway">
    <text evidence="1">Polyol metabolism; glycerol degradation via glycerol kinase pathway; sn-glycerol 3-phosphate from glycerol: step 1/1.</text>
</comment>
<comment type="similarity">
    <text evidence="1">Belongs to the FGGY kinase family.</text>
</comment>